<keyword id="KW-0997">Cell inner membrane</keyword>
<keyword id="KW-1003">Cell membrane</keyword>
<keyword id="KW-0133">Cell shape</keyword>
<keyword id="KW-0961">Cell wall biogenesis/degradation</keyword>
<keyword id="KW-0328">Glycosyltransferase</keyword>
<keyword id="KW-0472">Membrane</keyword>
<keyword id="KW-0573">Peptidoglycan synthesis</keyword>
<keyword id="KW-0808">Transferase</keyword>
<keyword id="KW-0812">Transmembrane</keyword>
<keyword id="KW-1133">Transmembrane helix</keyword>
<protein>
    <recommendedName>
        <fullName evidence="1">Biosynthetic peptidoglycan transglycosylase</fullName>
        <ecNumber evidence="1">2.4.99.28</ecNumber>
    </recommendedName>
    <alternativeName>
        <fullName evidence="1">Glycan polymerase</fullName>
    </alternativeName>
    <alternativeName>
        <fullName evidence="1">Peptidoglycan glycosyltransferase MtgA</fullName>
        <shortName evidence="1">PGT</shortName>
    </alternativeName>
</protein>
<evidence type="ECO:0000255" key="1">
    <source>
        <dbReference type="HAMAP-Rule" id="MF_00766"/>
    </source>
</evidence>
<feature type="chain" id="PRO_0000257701" description="Biosynthetic peptidoglycan transglycosylase">
    <location>
        <begin position="1"/>
        <end position="241"/>
    </location>
</feature>
<feature type="transmembrane region" description="Helical" evidence="1">
    <location>
        <begin position="18"/>
        <end position="38"/>
    </location>
</feature>
<name>MTGA_YERPN</name>
<accession>Q1CE18</accession>
<accession>D1Q1A8</accession>
<proteinExistence type="inferred from homology"/>
<reference key="1">
    <citation type="journal article" date="2006" name="J. Bacteriol.">
        <title>Complete genome sequence of Yersinia pestis strains Antiqua and Nepal516: evidence of gene reduction in an emerging pathogen.</title>
        <authorList>
            <person name="Chain P.S.G."/>
            <person name="Hu P."/>
            <person name="Malfatti S.A."/>
            <person name="Radnedge L."/>
            <person name="Larimer F."/>
            <person name="Vergez L.M."/>
            <person name="Worsham P."/>
            <person name="Chu M.C."/>
            <person name="Andersen G.L."/>
        </authorList>
    </citation>
    <scope>NUCLEOTIDE SEQUENCE [LARGE SCALE GENOMIC DNA]</scope>
    <source>
        <strain>Nepal516</strain>
    </source>
</reference>
<reference key="2">
    <citation type="submission" date="2009-04" db="EMBL/GenBank/DDBJ databases">
        <title>Yersinia pestis Nepal516A whole genome shotgun sequencing project.</title>
        <authorList>
            <person name="Plunkett G. III"/>
            <person name="Anderson B.D."/>
            <person name="Baumler D.J."/>
            <person name="Burland V."/>
            <person name="Cabot E.L."/>
            <person name="Glasner J.D."/>
            <person name="Mau B."/>
            <person name="Neeno-Eckwall E."/>
            <person name="Perna N.T."/>
            <person name="Munk A.C."/>
            <person name="Tapia R."/>
            <person name="Green L.D."/>
            <person name="Rogers Y.C."/>
            <person name="Detter J.C."/>
            <person name="Bruce D.C."/>
            <person name="Brettin T.S."/>
        </authorList>
    </citation>
    <scope>NUCLEOTIDE SEQUENCE [LARGE SCALE GENOMIC DNA]</scope>
    <source>
        <strain>Nepal516</strain>
    </source>
</reference>
<organism>
    <name type="scientific">Yersinia pestis bv. Antiqua (strain Nepal516)</name>
    <dbReference type="NCBI Taxonomy" id="377628"/>
    <lineage>
        <taxon>Bacteria</taxon>
        <taxon>Pseudomonadati</taxon>
        <taxon>Pseudomonadota</taxon>
        <taxon>Gammaproteobacteria</taxon>
        <taxon>Enterobacterales</taxon>
        <taxon>Yersiniaceae</taxon>
        <taxon>Yersinia</taxon>
    </lineage>
</organism>
<gene>
    <name evidence="1" type="primary">mtgA</name>
    <name type="ordered locus">YPN_3435</name>
    <name type="ORF">YP516_3905</name>
</gene>
<dbReference type="EC" id="2.4.99.28" evidence="1"/>
<dbReference type="EMBL" id="CP000305">
    <property type="protein sequence ID" value="ABG19762.1"/>
    <property type="molecule type" value="Genomic_DNA"/>
</dbReference>
<dbReference type="EMBL" id="ACNQ01000019">
    <property type="protein sequence ID" value="EEO74311.1"/>
    <property type="molecule type" value="Genomic_DNA"/>
</dbReference>
<dbReference type="RefSeq" id="WP_002210144.1">
    <property type="nucleotide sequence ID" value="NZ_ACNQ01000019.1"/>
</dbReference>
<dbReference type="SMR" id="Q1CE18"/>
<dbReference type="CAZy" id="GT51">
    <property type="family name" value="Glycosyltransferase Family 51"/>
</dbReference>
<dbReference type="GeneID" id="57975163"/>
<dbReference type="KEGG" id="ypn:YPN_3435"/>
<dbReference type="HOGENOM" id="CLU_006354_1_1_6"/>
<dbReference type="UniPathway" id="UPA00219"/>
<dbReference type="Proteomes" id="UP000008936">
    <property type="component" value="Chromosome"/>
</dbReference>
<dbReference type="GO" id="GO:0009274">
    <property type="term" value="C:peptidoglycan-based cell wall"/>
    <property type="evidence" value="ECO:0007669"/>
    <property type="project" value="InterPro"/>
</dbReference>
<dbReference type="GO" id="GO:0005886">
    <property type="term" value="C:plasma membrane"/>
    <property type="evidence" value="ECO:0007669"/>
    <property type="project" value="UniProtKB-SubCell"/>
</dbReference>
<dbReference type="GO" id="GO:0016763">
    <property type="term" value="F:pentosyltransferase activity"/>
    <property type="evidence" value="ECO:0007669"/>
    <property type="project" value="InterPro"/>
</dbReference>
<dbReference type="GO" id="GO:0008955">
    <property type="term" value="F:peptidoglycan glycosyltransferase activity"/>
    <property type="evidence" value="ECO:0007669"/>
    <property type="project" value="UniProtKB-UniRule"/>
</dbReference>
<dbReference type="GO" id="GO:0071555">
    <property type="term" value="P:cell wall organization"/>
    <property type="evidence" value="ECO:0007669"/>
    <property type="project" value="UniProtKB-KW"/>
</dbReference>
<dbReference type="GO" id="GO:0009252">
    <property type="term" value="P:peptidoglycan biosynthetic process"/>
    <property type="evidence" value="ECO:0007669"/>
    <property type="project" value="UniProtKB-UniRule"/>
</dbReference>
<dbReference type="GO" id="GO:0008360">
    <property type="term" value="P:regulation of cell shape"/>
    <property type="evidence" value="ECO:0007669"/>
    <property type="project" value="UniProtKB-KW"/>
</dbReference>
<dbReference type="Gene3D" id="1.10.3810.10">
    <property type="entry name" value="Biosynthetic peptidoglycan transglycosylase-like"/>
    <property type="match status" value="1"/>
</dbReference>
<dbReference type="HAMAP" id="MF_00766">
    <property type="entry name" value="PGT_MtgA"/>
    <property type="match status" value="1"/>
</dbReference>
<dbReference type="InterPro" id="IPR001264">
    <property type="entry name" value="Glyco_trans_51"/>
</dbReference>
<dbReference type="InterPro" id="IPR023346">
    <property type="entry name" value="Lysozyme-like_dom_sf"/>
</dbReference>
<dbReference type="InterPro" id="IPR036950">
    <property type="entry name" value="PBP_transglycosylase"/>
</dbReference>
<dbReference type="InterPro" id="IPR011812">
    <property type="entry name" value="Pep_trsgly"/>
</dbReference>
<dbReference type="NCBIfam" id="TIGR02070">
    <property type="entry name" value="mono_pep_trsgly"/>
    <property type="match status" value="1"/>
</dbReference>
<dbReference type="PANTHER" id="PTHR30400:SF0">
    <property type="entry name" value="BIOSYNTHETIC PEPTIDOGLYCAN TRANSGLYCOSYLASE"/>
    <property type="match status" value="1"/>
</dbReference>
<dbReference type="PANTHER" id="PTHR30400">
    <property type="entry name" value="MONOFUNCTIONAL BIOSYNTHETIC PEPTIDOGLYCAN TRANSGLYCOSYLASE"/>
    <property type="match status" value="1"/>
</dbReference>
<dbReference type="Pfam" id="PF00912">
    <property type="entry name" value="Transgly"/>
    <property type="match status" value="1"/>
</dbReference>
<dbReference type="SUPFAM" id="SSF53955">
    <property type="entry name" value="Lysozyme-like"/>
    <property type="match status" value="1"/>
</dbReference>
<comment type="function">
    <text evidence="1">Peptidoglycan polymerase that catalyzes glycan chain elongation from lipid-linked precursors.</text>
</comment>
<comment type="catalytic activity">
    <reaction evidence="1">
        <text>[GlcNAc-(1-&gt;4)-Mur2Ac(oyl-L-Ala-gamma-D-Glu-L-Lys-D-Ala-D-Ala)](n)-di-trans,octa-cis-undecaprenyl diphosphate + beta-D-GlcNAc-(1-&gt;4)-Mur2Ac(oyl-L-Ala-gamma-D-Glu-L-Lys-D-Ala-D-Ala)-di-trans,octa-cis-undecaprenyl diphosphate = [GlcNAc-(1-&gt;4)-Mur2Ac(oyl-L-Ala-gamma-D-Glu-L-Lys-D-Ala-D-Ala)](n+1)-di-trans,octa-cis-undecaprenyl diphosphate + di-trans,octa-cis-undecaprenyl diphosphate + H(+)</text>
        <dbReference type="Rhea" id="RHEA:23708"/>
        <dbReference type="Rhea" id="RHEA-COMP:9602"/>
        <dbReference type="Rhea" id="RHEA-COMP:9603"/>
        <dbReference type="ChEBI" id="CHEBI:15378"/>
        <dbReference type="ChEBI" id="CHEBI:58405"/>
        <dbReference type="ChEBI" id="CHEBI:60033"/>
        <dbReference type="ChEBI" id="CHEBI:78435"/>
        <dbReference type="EC" id="2.4.99.28"/>
    </reaction>
</comment>
<comment type="pathway">
    <text evidence="1">Cell wall biogenesis; peptidoglycan biosynthesis.</text>
</comment>
<comment type="subcellular location">
    <subcellularLocation>
        <location evidence="1">Cell inner membrane</location>
        <topology evidence="1">Single-pass membrane protein</topology>
    </subcellularLocation>
</comment>
<comment type="similarity">
    <text evidence="1">Belongs to the glycosyltransferase 51 family.</text>
</comment>
<sequence length="241" mass="27096">MISVRRGFSQLWYWGKRGVIGIIALWMAGILIFAFLPVPFSMVMIERQLGAWLTGDFAYVAHSDWVPMDEISPYMALAVMAAEDQKFPDHWGFDVGAIESALSHNQRNQKRIRGASTLSQQTAKNVFLWDGRSWVRKGLEVGLTAGIELIWTKRRILTVYLNIAEFGNGIFGVEAAARHFFNKPASKLSASEAALLAAVLPNPLRFKVNAPSGYVISRQQWILRQMHQLGGKTFLQENTLD</sequence>